<name>PP2BA_RAT</name>
<comment type="function">
    <text evidence="2 3 4 8 10 11">Calcium-dependent, calmodulin-stimulated protein phosphatase which plays an essential role in the transduction of intracellular Ca(2+)-mediated signals (PubMed:1322410, PubMed:24018048). Many of the substrates contain a PxIxIT motif and/or a LxVP motif (By similarity). In response to increased Ca(2+) levels, dephosphorylates and activates phosphatase SSH1 which results in cofilin dephosphorylation (By similarity). In response to increased Ca(2+) levels following mitochondrial depolarization, dephosphorylates DNM1L inducing DNM1L translocation to the mitochondrion (By similarity). Positively regulates the CACNA1B/CAV2.2-mediated Ca(2+) release probability at hippocampal neuronal soma and synaptic terminals (PubMed:23699505). Dephosphorylates heat shock protein HSPB1 (By similarity). Dephosphorylates and activates transcription factor NFATC1 (By similarity). Dephosphorylates and inactivates transcription factor ELK1 (By similarity). Dephosphorylates DARPP32 (By similarity). May dephosphorylate CRTC2 at 'Ser-171' resulting in CRTC2 dissociation from 14-3-3 proteins (By similarity). Required for postnatal development of the nephrogenic zone and superficial glomeruli in the kidneys, cell cycle homeostasis in the nephrogenic zone, and ultimately normal kidney function (By similarity). Plays a role in intracellular AQP2 processing and localization to the apical membrane in the kidney, may thereby be required for efficient kidney filtration (By similarity). Required for secretion of salivary enzymes amylase, peroxidase, lysozyme and sialic acid via formation of secretory vesicles in the submandibular glands (By similarity). Required for calcineurin activity and homosynaptic depotentiation in the hippocampus (By similarity). Required for normal differentiation and survival of keratinocytes and therefore required for epidermis superstructure formation (By similarity). Positively regulates osteoblastic bone formation, via promotion of osteoblast differentiation (By similarity). Positively regulates osteoclast differentiation, potentially via NFATC1 signaling (By similarity). May play a role in skeletal muscle fiber type specification, potentially via NFATC1 signaling (By similarity). Negatively regulates MAP3K14/NIK signaling via inhibition of nuclear translocation of the transcription factors RELA and RELB (By similarity). Required for antigen-specific T-cell proliferation response (By similarity). Dephosphorylates KLHL3, promoting the interaction between KLHL3 and WNK4 and subsequent degradation of WNK4 (By similarity). Negatively regulates SLC9A1 activity (By similarity).</text>
</comment>
<comment type="catalytic activity">
    <reaction evidence="8 11">
        <text>O-phospho-L-seryl-[protein] + H2O = L-seryl-[protein] + phosphate</text>
        <dbReference type="Rhea" id="RHEA:20629"/>
        <dbReference type="Rhea" id="RHEA-COMP:9863"/>
        <dbReference type="Rhea" id="RHEA-COMP:11604"/>
        <dbReference type="ChEBI" id="CHEBI:15377"/>
        <dbReference type="ChEBI" id="CHEBI:29999"/>
        <dbReference type="ChEBI" id="CHEBI:43474"/>
        <dbReference type="ChEBI" id="CHEBI:83421"/>
        <dbReference type="EC" id="3.1.3.16"/>
    </reaction>
</comment>
<comment type="catalytic activity">
    <reaction evidence="8 11">
        <text>O-phospho-L-threonyl-[protein] + H2O = L-threonyl-[protein] + phosphate</text>
        <dbReference type="Rhea" id="RHEA:47004"/>
        <dbReference type="Rhea" id="RHEA-COMP:11060"/>
        <dbReference type="Rhea" id="RHEA-COMP:11605"/>
        <dbReference type="ChEBI" id="CHEBI:15377"/>
        <dbReference type="ChEBI" id="CHEBI:30013"/>
        <dbReference type="ChEBI" id="CHEBI:43474"/>
        <dbReference type="ChEBI" id="CHEBI:61977"/>
        <dbReference type="EC" id="3.1.3.16"/>
    </reaction>
</comment>
<comment type="cofactor">
    <cofactor evidence="4">
        <name>Fe(3+)</name>
        <dbReference type="ChEBI" id="CHEBI:29034"/>
    </cofactor>
    <text evidence="4">Binds 1 Fe(3+) ion per subunit.</text>
</comment>
<comment type="cofactor">
    <cofactor evidence="4">
        <name>Zn(2+)</name>
        <dbReference type="ChEBI" id="CHEBI:29105"/>
    </cofactor>
    <text evidence="4">Binds 1 zinc ion per subunit.</text>
</comment>
<comment type="activity regulation">
    <text evidence="2 8 11">Activated by Ca(2+)-bound calmodulin following an increase in intracellular Ca(2+) (PubMed:1322410, PubMed:24018048). At low Ca(2+) concentrations, the catalytic subunit (also known as calcineurin A) is inactive and is bound to the regulatory subunit (also known as calcineurin B) in which only two high-affinity binding sites are occupied by Ca(2+) (PubMed:1322410, PubMed:24018048). In response to elevated calcium levels, the occupancy of the low-affinity sites on calcineurin B by Ca(2+) causes a conformational change of the C-terminal regulatory domain of calcineurin A, resulting in the exposure of the calmodulin-binding domain and in the partial activation of calcineurin A (PubMed:1322410, PubMed:24018048). The subsequent binding of Ca(2+)-bound calmodulin leads to the displacement of the autoinhibitory domain from the active site and possibly of the autoinhibitory segment from the substrate binding site which fully activates calcineurin A (PubMed:1322410, PubMed:24018048). Inhibited by immunosuppressant drug FK506 (tacrolimus) in complex with FKBP12 and also by immunosuppressant drug cyclosporin A (CsA) in complex with PPIA/cyclophilin A; the inhibition is Ca(2+)-dependent (By similarity).</text>
</comment>
<comment type="subunit">
    <text evidence="2 3 4 6 9">Forms a complex composed of a calmodulin-dependent catalytic subunit (also known as calcineurin A) and a regulatory Ca(2+)-binding subunit (also known as calcineurin B) (By similarity). There are three catalytic subunits, each encoded by a separate gene (PPP3CA, PPP3CB, and PPP3CC) and two regulatory subunits which are also encoded by separate genes (PPP3R1 and PPP3R2). In response to an increase in Ca(2+) intracellular levels, forms a complex composed of PPP3CA/calcineurin A, calcineurin B and calmodulin (By similarity). Interacts (via calcineurin B binding domain) with regulatory subunit PPP3R1/calcineurin B (By similarity). Interacts (via calmodulin-binding domain) with calmodulin; the interaction depends on calmodulin binding to Ca(2+) (By similarity). Forms a complex composed of MYOZ2 and ACTN1 (By similarity). Within the complex interacts with MYOZ2 (By similarity). Interacts with MYOZ1 (By similarity). Interacts with MYOZ3 (By similarity). Interacts with CIB1; the interaction increases upon cardiomyocyte hypertrophy (By similarity). Interacts with CHP1 and CHP2 (PubMed:10593895, PubMed:18815128). Interacts with CRTC1. Interacts with CRTC2 (By similarity). Interacts with DNM1L; the interaction dephosphorylates DNM1L and promotes its translocation to mitochondria (By similarity). Interacts with CMYA5; this interaction represses calcineurin activity in muscle (By similarity). Interacts (constitutively active form) with SYNPO2 (By similarity). Interacts with scaffold protein AKAP5 (via IAIIIT motif); the interaction recruits PPP3CA to the plasma membrane following L-type Ca(2+)-channel activation (By similarity). Interacts with NFATC2 (By similarity). Interacts with RCAN3 (By similarity). Interacts with PPIA. Interacts with RCAN1 (By similarity). Interacts with UNC119 (By similarity). Interacts with C16orf74 (via PxIxIT motif, when phosphorylated on 'Thr-76') (By similarity). Interacts (via N-terminus) with MAP3K14/NIK (via C-terminus and kinase domain) (By similarity). Interacts with TRAF3 (By similarity). Interacts with SPATA33 (via PQIIIT motif) (By similarity).</text>
</comment>
<comment type="interaction">
    <interactant intactId="EBI-7022944">
        <id>P63329</id>
    </interactant>
    <interactant intactId="EBI-1185084">
        <id>P22002</id>
        <label>Cacna1c</label>
    </interactant>
    <organismsDiffer>false</organismsDiffer>
    <experiments>5</experiments>
</comment>
<comment type="interaction">
    <interactant intactId="EBI-7022944">
        <id>P63329</id>
    </interactant>
    <interactant intactId="EBI-9086576">
        <id>Q8VHW5</id>
        <label>Cacng8</label>
    </interactant>
    <organismsDiffer>false</organismsDiffer>
    <experiments>6</experiments>
</comment>
<comment type="subcellular location">
    <subcellularLocation>
        <location evidence="4">Cytoplasm</location>
    </subcellularLocation>
    <subcellularLocation>
        <location evidence="4">Cell membrane</location>
        <topology evidence="4">Peripheral membrane protein</topology>
    </subcellularLocation>
    <subcellularLocation>
        <location evidence="7">Cell membrane</location>
        <location evidence="7">Sarcolemma</location>
    </subcellularLocation>
    <subcellularLocation>
        <location evidence="7">Cytoplasm</location>
        <location evidence="7">Myofibril</location>
        <location evidence="7">Sarcomere</location>
        <location evidence="7">Z line</location>
    </subcellularLocation>
    <subcellularLocation>
        <location evidence="4">Cell projection</location>
        <location evidence="4">Dendritic spine</location>
    </subcellularLocation>
    <text evidence="4 7">Colocalizes with ACTN1 and MYOZ2 at the Z line in heart and skeletal muscle (PubMed:11114196). Recruited to the cell membrane by scaffold protein AKAP5 following L-type Ca(2+)-channel activation (By similarity).</text>
</comment>
<comment type="alternative products">
    <event type="alternative splicing"/>
    <isoform>
        <id>P63329-1</id>
        <name>1</name>
        <sequence type="displayed"/>
    </isoform>
    <isoform>
        <id>P63329-2</id>
        <name>2</name>
        <sequence type="described" ref="VSP_018564"/>
    </isoform>
</comment>
<comment type="tissue specificity">
    <text evidence="7 10">Expressed in neonatal cardiomyocytes (at protein level) (PubMed:11114196). Expressed in hippocampal presynaptic termini (at protein level) (PubMed:23699505).</text>
</comment>
<comment type="domain">
    <text evidence="3">The autoinhibitory domain prevents access to the catalytic site.</text>
</comment>
<comment type="domain">
    <text evidence="3">The autoinhibitory segment prevents access to the substrate binding site.</text>
</comment>
<comment type="domain">
    <text evidence="4">Possible isomerization of Pro-309 within the SAPNY motif triggers a conformation switch which affects the organization and thus accessibility of the active site and the substrate binding region (PxIxIF motif). The trans- to cis-transition may favor calcineurin A activation and substrate binding. The reverse cis- to trans-transition may be enhanced by peptidyl-prolyl isomerases such as PPIA.</text>
</comment>
<comment type="similarity">
    <text evidence="14">Belongs to the PPP phosphatase family. PP-2B subfamily.</text>
</comment>
<keyword id="KW-0002">3D-structure</keyword>
<keyword id="KW-0007">Acetylation</keyword>
<keyword id="KW-0025">Alternative splicing</keyword>
<keyword id="KW-0112">Calmodulin-binding</keyword>
<keyword id="KW-1003">Cell membrane</keyword>
<keyword id="KW-0966">Cell projection</keyword>
<keyword id="KW-0963">Cytoplasm</keyword>
<keyword id="KW-0903">Direct protein sequencing</keyword>
<keyword id="KW-0378">Hydrolase</keyword>
<keyword id="KW-0408">Iron</keyword>
<keyword id="KW-0472">Membrane</keyword>
<keyword id="KW-0479">Metal-binding</keyword>
<keyword id="KW-0944">Nitration</keyword>
<keyword id="KW-0597">Phosphoprotein</keyword>
<keyword id="KW-0904">Protein phosphatase</keyword>
<keyword id="KW-1185">Reference proteome</keyword>
<keyword id="KW-0770">Synapse</keyword>
<keyword id="KW-0862">Zinc</keyword>
<sequence length="521" mass="58644">MSEPKAIDPKLSTTDRVVKAVPFPPSHRLTAKEVFDNDGKPRVDILKAHLMKEGRLEESVALRIITEGASILRQEKNLLDIDAPVTVCGDIHGQFFDLMKLFEVGGSPANTRYLFLGDYVDRGYFSIECVLYLWALKILYPKTLFLLRGNHECRHLTEYFTFKQECKIKYSERVYDACMDAFDCLPLAALMNQQFLCVHGGLSPEINTLDDIRKLDRFKEPPAYGPMCDILWSDPLEDFGNEKTQEHFTHNTVRGCSYFYSYPAVCDFLQHNNLLSILRAHEAQDAGYRMYRKSQTTGFPSLITIFSAPNYLDVYNNKAAVLKYENNVMNIRQFNCSPHPYWLPNFMDVFTWSLPFVGEKVTEMLVNVLNICSDDELGSEEDGFDGATAAARKEVIRNKIRAIGKMARVFSVLREESESVLTLKGLTPTGMLPSGVLSGGKQTLQSATVEAIEADEAIKGFSPQHKITSFEEAKGLDRINERMPPRRDAMPSDANLNSINKALASETNGTDSNGSNSSNIQ</sequence>
<organism>
    <name type="scientific">Rattus norvegicus</name>
    <name type="common">Rat</name>
    <dbReference type="NCBI Taxonomy" id="10116"/>
    <lineage>
        <taxon>Eukaryota</taxon>
        <taxon>Metazoa</taxon>
        <taxon>Chordata</taxon>
        <taxon>Craniata</taxon>
        <taxon>Vertebrata</taxon>
        <taxon>Euteleostomi</taxon>
        <taxon>Mammalia</taxon>
        <taxon>Eutheria</taxon>
        <taxon>Euarchontoglires</taxon>
        <taxon>Glires</taxon>
        <taxon>Rodentia</taxon>
        <taxon>Myomorpha</taxon>
        <taxon>Muroidea</taxon>
        <taxon>Muridae</taxon>
        <taxon>Murinae</taxon>
        <taxon>Rattus</taxon>
    </lineage>
</organism>
<gene>
    <name evidence="15" type="primary">Ppp3ca</name>
    <name type="synonym">Calna</name>
</gene>
<reference key="1">
    <citation type="journal article" date="1989" name="Biochem. Biophys. Res. Commun.">
        <title>The complete primary structure of calcineurin A, a calmodulin binding protein homologous with protein phosphatases 1 and 2A.</title>
        <authorList>
            <person name="Ito A."/>
            <person name="Hashimoto T."/>
            <person name="Hirai M."/>
            <person name="Takeda T."/>
            <person name="Shuntoh H."/>
            <person name="Kuno T."/>
            <person name="Tanaka C."/>
        </authorList>
    </citation>
    <scope>NUCLEOTIDE SEQUENCE [MRNA] (ISOFORM 1)</scope>
</reference>
<reference key="2">
    <citation type="journal article" date="1992" name="J. Biol. Chem.">
        <title>Characterization of the phosphatase activity of a baculovirus-expressed calcineurin A isoform.</title>
        <authorList>
            <person name="Perrino B.A."/>
            <person name="Fong Y.L."/>
            <person name="Brickey D.A."/>
            <person name="Saitoh Y."/>
            <person name="Ushio Y."/>
            <person name="Fukunaga K."/>
            <person name="Miyamoto E."/>
            <person name="Soderling T.R."/>
        </authorList>
    </citation>
    <scope>NUCLEOTIDE SEQUENCE [MRNA] (ISOFORM 2)</scope>
    <scope>FUNCTION</scope>
    <scope>CATALYTIC ACTIVITY</scope>
    <scope>ACTIVITY REGULATION</scope>
</reference>
<reference key="3">
    <citation type="journal article" date="1992" name="Biochem. J.">
        <title>Molecular cloning and characterization of the promoter region of the calcineurin A alpha gene.</title>
        <authorList>
            <person name="Chang C."/>
            <person name="Takeda T."/>
            <person name="Mukai H."/>
            <person name="Shuntoh H."/>
            <person name="Kuno T."/>
            <person name="Tanaka C."/>
        </authorList>
    </citation>
    <scope>NUCLEOTIDE SEQUENCE [GENOMIC DNA] OF 1-19</scope>
    <source>
        <tissue>Liver</tissue>
    </source>
</reference>
<reference key="4">
    <citation type="submission" date="2007-07" db="UniProtKB">
        <authorList>
            <person name="Lubec G."/>
            <person name="Kang S.U."/>
        </authorList>
    </citation>
    <scope>PROTEIN SEQUENCE OF 143-148</scope>
    <scope>IDENTIFICATION BY MASS SPECTROMETRY</scope>
    <source>
        <strain>Sprague-Dawley</strain>
        <tissue>Brain</tissue>
    </source>
</reference>
<reference key="5">
    <citation type="journal article" date="1990" name="J. Biol. Chem.">
        <title>Multiplicity of protein serine-threonine phosphatases in PC12 pheochromocytoma and FTO-2B hepatoma cells.</title>
        <authorList>
            <person name="Wadzinski B.E."/>
            <person name="Heasley L.E."/>
            <person name="Johnson G.L."/>
        </authorList>
    </citation>
    <scope>NUCLEOTIDE SEQUENCE [MRNA] OF 236-306</scope>
</reference>
<reference key="6">
    <citation type="journal article" date="1999" name="J. Biol. Chem.">
        <title>Inhibition of calcineurin phosphatase activity by a calcineurin B homologous protein.</title>
        <authorList>
            <person name="Lin X."/>
            <person name="Sikkink R.A."/>
            <person name="Rusnak F."/>
            <person name="Barber D.L."/>
        </authorList>
    </citation>
    <scope>INTERACTION WITH CHP1</scope>
</reference>
<reference key="7">
    <citation type="journal article" date="2000" name="Proc. Natl. Acad. Sci. U.S.A.">
        <title>Calsarcins, a novel family of sarcomeric calcineurin-binding proteins.</title>
        <authorList>
            <person name="Frey N."/>
            <person name="Richardson J.A."/>
            <person name="Olson E.N."/>
        </authorList>
    </citation>
    <scope>SUBCELLULAR LOCATION</scope>
</reference>
<reference key="8">
    <citation type="journal article" date="2008" name="J. Biol. Chem.">
        <title>CHP2 activates the calcineurin/nuclear factor of activated T cells signaling pathway and enhances the oncogenic potential of HEK293 cells.</title>
        <authorList>
            <person name="Li G.D."/>
            <person name="Zhang X."/>
            <person name="Li R."/>
            <person name="Wang Y.D."/>
            <person name="Wang Y.L."/>
            <person name="Han K.J."/>
            <person name="Qian X.P."/>
            <person name="Yang C.G."/>
            <person name="Liu P."/>
            <person name="Wei Q."/>
            <person name="Chen W.F."/>
            <person name="Zhang J."/>
            <person name="Zhang Y."/>
        </authorList>
    </citation>
    <scope>INTERACTION WITH CHP2</scope>
</reference>
<reference key="9">
    <citation type="journal article" date="2012" name="Nat. Commun.">
        <title>Quantitative maps of protein phosphorylation sites across 14 different rat organs and tissues.</title>
        <authorList>
            <person name="Lundby A."/>
            <person name="Secher A."/>
            <person name="Lage K."/>
            <person name="Nordsborg N.B."/>
            <person name="Dmytriyev A."/>
            <person name="Lundby C."/>
            <person name="Olsen J.V."/>
        </authorList>
    </citation>
    <scope>PHOSPHORYLATION [LARGE SCALE ANALYSIS] AT SER-469</scope>
    <scope>IDENTIFICATION BY MASS SPECTROMETRY [LARGE SCALE ANALYSIS]</scope>
</reference>
<reference key="10">
    <citation type="journal article" date="2013" name="J. Neurosci.">
        <title>Balance of calcineurin Aalpha and CDK5 activities sets release probability at nerve terminals.</title>
        <authorList>
            <person name="Kim S.H."/>
            <person name="Ryan T.A."/>
        </authorList>
    </citation>
    <scope>FUNCTION</scope>
    <scope>TISSUE SPECIFICITY</scope>
</reference>
<reference key="11">
    <citation type="journal article" date="2013" name="Cell. Signal.">
        <title>Structural basis of calcineurin activation by calmodulin.</title>
        <authorList>
            <person name="Ye Q."/>
            <person name="Feng Y."/>
            <person name="Yin Y."/>
            <person name="Faucher F."/>
            <person name="Currie M.A."/>
            <person name="Rahman M.N."/>
            <person name="Jin J."/>
            <person name="Li S."/>
            <person name="Wei Q."/>
            <person name="Jia Z."/>
        </authorList>
    </citation>
    <scope>X-RAY CRYSTALLOGRAPHY (3.00 ANGSTROMS) OF 1-492</scope>
    <scope>FUNCTION</scope>
    <scope>CATALYTIC ACTIVITY</scope>
    <scope>ACTIVITY REGULATION</scope>
</reference>
<accession>P63329</accession>
<accession>P12816</accession>
<accession>P20652</accession>
<accession>Q6LDJ8</accession>
<accession>Q9WUV7</accession>
<accession>Q9Z1I5</accession>
<evidence type="ECO:0000250" key="1">
    <source>
        <dbReference type="UniProtKB" id="P16298"/>
    </source>
</evidence>
<evidence type="ECO:0000250" key="2">
    <source>
        <dbReference type="UniProtKB" id="P48452"/>
    </source>
</evidence>
<evidence type="ECO:0000250" key="3">
    <source>
        <dbReference type="UniProtKB" id="P63328"/>
    </source>
</evidence>
<evidence type="ECO:0000250" key="4">
    <source>
        <dbReference type="UniProtKB" id="Q08209"/>
    </source>
</evidence>
<evidence type="ECO:0000256" key="5">
    <source>
        <dbReference type="SAM" id="MobiDB-lite"/>
    </source>
</evidence>
<evidence type="ECO:0000269" key="6">
    <source>
    </source>
</evidence>
<evidence type="ECO:0000269" key="7">
    <source>
    </source>
</evidence>
<evidence type="ECO:0000269" key="8">
    <source>
    </source>
</evidence>
<evidence type="ECO:0000269" key="9">
    <source>
    </source>
</evidence>
<evidence type="ECO:0000269" key="10">
    <source>
    </source>
</evidence>
<evidence type="ECO:0000269" key="11">
    <source>
    </source>
</evidence>
<evidence type="ECO:0000303" key="12">
    <source>
    </source>
</evidence>
<evidence type="ECO:0000303" key="13">
    <source>
    </source>
</evidence>
<evidence type="ECO:0000305" key="14"/>
<evidence type="ECO:0000312" key="15">
    <source>
        <dbReference type="RGD" id="3382"/>
    </source>
</evidence>
<evidence type="ECO:0007744" key="16">
    <source>
    </source>
</evidence>
<evidence type="ECO:0007829" key="17">
    <source>
        <dbReference type="PDB" id="4IL1"/>
    </source>
</evidence>
<feature type="initiator methionine" description="Removed" evidence="4">
    <location>
        <position position="1"/>
    </location>
</feature>
<feature type="chain" id="PRO_0000058824" description="Protein phosphatase 3 catalytic subunit alpha">
    <location>
        <begin position="2"/>
        <end position="521"/>
    </location>
</feature>
<feature type="region of interest" description="Catalytic" evidence="14">
    <location>
        <begin position="56"/>
        <end position="340"/>
    </location>
</feature>
<feature type="region of interest" description="Interaction with PxIxIF motif in substrate" evidence="4">
    <location>
        <begin position="327"/>
        <end position="336"/>
    </location>
</feature>
<feature type="region of interest" description="Calcineurin B binding" evidence="4">
    <location>
        <begin position="341"/>
        <end position="369"/>
    </location>
</feature>
<feature type="region of interest" description="Calmodulin-binding" evidence="4">
    <location>
        <begin position="392"/>
        <end position="406"/>
    </location>
</feature>
<feature type="region of interest" description="Autoinhibitory segment" evidence="1">
    <location>
        <begin position="407"/>
        <end position="414"/>
    </location>
</feature>
<feature type="region of interest" description="Autoinhibitory domain" evidence="8">
    <location>
        <begin position="465"/>
        <end position="487"/>
    </location>
</feature>
<feature type="region of interest" description="Disordered" evidence="5">
    <location>
        <begin position="475"/>
        <end position="521"/>
    </location>
</feature>
<feature type="short sequence motif" description="SAPNY motif" evidence="4">
    <location>
        <begin position="307"/>
        <end position="311"/>
    </location>
</feature>
<feature type="compositionally biased region" description="Basic and acidic residues" evidence="5">
    <location>
        <begin position="475"/>
        <end position="490"/>
    </location>
</feature>
<feature type="compositionally biased region" description="Low complexity" evidence="5">
    <location>
        <begin position="507"/>
        <end position="521"/>
    </location>
</feature>
<feature type="active site" description="Proton donor" evidence="4">
    <location>
        <position position="151"/>
    </location>
</feature>
<feature type="binding site" evidence="4">
    <location>
        <position position="90"/>
    </location>
    <ligand>
        <name>Fe cation</name>
        <dbReference type="ChEBI" id="CHEBI:24875"/>
    </ligand>
</feature>
<feature type="binding site" evidence="4">
    <location>
        <position position="92"/>
    </location>
    <ligand>
        <name>Fe cation</name>
        <dbReference type="ChEBI" id="CHEBI:24875"/>
    </ligand>
</feature>
<feature type="binding site" evidence="4">
    <location>
        <position position="118"/>
    </location>
    <ligand>
        <name>Fe cation</name>
        <dbReference type="ChEBI" id="CHEBI:24875"/>
    </ligand>
</feature>
<feature type="binding site" evidence="4">
    <location>
        <position position="118"/>
    </location>
    <ligand>
        <name>Zn(2+)</name>
        <dbReference type="ChEBI" id="CHEBI:29105"/>
    </ligand>
</feature>
<feature type="binding site" evidence="4">
    <location>
        <position position="150"/>
    </location>
    <ligand>
        <name>Zn(2+)</name>
        <dbReference type="ChEBI" id="CHEBI:29105"/>
    </ligand>
</feature>
<feature type="binding site" evidence="4">
    <location>
        <position position="199"/>
    </location>
    <ligand>
        <name>Zn(2+)</name>
        <dbReference type="ChEBI" id="CHEBI:29105"/>
    </ligand>
</feature>
<feature type="binding site" evidence="4">
    <location>
        <position position="281"/>
    </location>
    <ligand>
        <name>Zn(2+)</name>
        <dbReference type="ChEBI" id="CHEBI:29105"/>
    </ligand>
</feature>
<feature type="site" description="Interaction with PxVP motif in substrate" evidence="4">
    <location>
        <position position="352"/>
    </location>
</feature>
<feature type="modified residue" description="N-acetylserine" evidence="4">
    <location>
        <position position="2"/>
    </location>
</feature>
<feature type="modified residue" description="3'-nitrotyrosine" evidence="3">
    <location>
        <position position="224"/>
    </location>
</feature>
<feature type="modified residue" description="Phosphoserine" evidence="16">
    <location>
        <position position="469"/>
    </location>
</feature>
<feature type="modified residue" description="Phosphoserine" evidence="4">
    <location>
        <position position="492"/>
    </location>
</feature>
<feature type="splice variant" id="VSP_018564" description="In isoform 2." evidence="12">
    <location>
        <begin position="448"/>
        <end position="457"/>
    </location>
</feature>
<feature type="helix" evidence="17">
    <location>
        <begin position="31"/>
        <end position="34"/>
    </location>
</feature>
<feature type="helix" evidence="17">
    <location>
        <begin position="43"/>
        <end position="51"/>
    </location>
</feature>
<feature type="helix" evidence="17">
    <location>
        <begin position="58"/>
        <end position="72"/>
    </location>
</feature>
<feature type="strand" evidence="17">
    <location>
        <begin position="77"/>
        <end position="81"/>
    </location>
</feature>
<feature type="strand" evidence="17">
    <location>
        <begin position="83"/>
        <end position="88"/>
    </location>
</feature>
<feature type="helix" evidence="17">
    <location>
        <begin position="95"/>
        <end position="105"/>
    </location>
</feature>
<feature type="turn" evidence="17">
    <location>
        <begin position="108"/>
        <end position="110"/>
    </location>
</feature>
<feature type="strand" evidence="17">
    <location>
        <begin position="113"/>
        <end position="115"/>
    </location>
</feature>
<feature type="strand" evidence="17">
    <location>
        <begin position="120"/>
        <end position="123"/>
    </location>
</feature>
<feature type="helix" evidence="17">
    <location>
        <begin position="126"/>
        <end position="139"/>
    </location>
</feature>
<feature type="turn" evidence="17">
    <location>
        <begin position="141"/>
        <end position="143"/>
    </location>
</feature>
<feature type="strand" evidence="17">
    <location>
        <begin position="144"/>
        <end position="146"/>
    </location>
</feature>
<feature type="helix" evidence="17">
    <location>
        <begin position="154"/>
        <end position="159"/>
    </location>
</feature>
<feature type="helix" evidence="17">
    <location>
        <begin position="162"/>
        <end position="168"/>
    </location>
</feature>
<feature type="helix" evidence="17">
    <location>
        <begin position="172"/>
        <end position="184"/>
    </location>
</feature>
<feature type="strand" evidence="17">
    <location>
        <begin position="188"/>
        <end position="191"/>
    </location>
</feature>
<feature type="turn" evidence="17">
    <location>
        <begin position="192"/>
        <end position="194"/>
    </location>
</feature>
<feature type="strand" evidence="17">
    <location>
        <begin position="195"/>
        <end position="200"/>
    </location>
</feature>
<feature type="helix" evidence="17">
    <location>
        <begin position="209"/>
        <end position="213"/>
    </location>
</feature>
<feature type="strand" evidence="17">
    <location>
        <begin position="218"/>
        <end position="220"/>
    </location>
</feature>
<feature type="strand" evidence="17">
    <location>
        <begin position="223"/>
        <end position="225"/>
    </location>
</feature>
<feature type="helix" evidence="17">
    <location>
        <begin position="226"/>
        <end position="232"/>
    </location>
</feature>
<feature type="turn" evidence="17">
    <location>
        <begin position="237"/>
        <end position="240"/>
    </location>
</feature>
<feature type="strand" evidence="17">
    <location>
        <begin position="247"/>
        <end position="250"/>
    </location>
</feature>
<feature type="turn" evidence="17">
    <location>
        <begin position="252"/>
        <end position="255"/>
    </location>
</feature>
<feature type="strand" evidence="17">
    <location>
        <begin position="256"/>
        <end position="260"/>
    </location>
</feature>
<feature type="helix" evidence="17">
    <location>
        <begin position="262"/>
        <end position="271"/>
    </location>
</feature>
<feature type="strand" evidence="17">
    <location>
        <begin position="275"/>
        <end position="279"/>
    </location>
</feature>
<feature type="strand" evidence="17">
    <location>
        <begin position="287"/>
        <end position="290"/>
    </location>
</feature>
<feature type="turn" evidence="17">
    <location>
        <begin position="295"/>
        <end position="297"/>
    </location>
</feature>
<feature type="strand" evidence="17">
    <location>
        <begin position="299"/>
        <end position="306"/>
    </location>
</feature>
<feature type="helix" evidence="17">
    <location>
        <begin position="311"/>
        <end position="313"/>
    </location>
</feature>
<feature type="strand" evidence="17">
    <location>
        <begin position="319"/>
        <end position="325"/>
    </location>
</feature>
<feature type="strand" evidence="17">
    <location>
        <begin position="328"/>
        <end position="334"/>
    </location>
</feature>
<feature type="helix" evidence="17">
    <location>
        <begin position="344"/>
        <end position="346"/>
    </location>
</feature>
<feature type="helix" evidence="17">
    <location>
        <begin position="349"/>
        <end position="366"/>
    </location>
</feature>
<feature type="helix" evidence="17">
    <location>
        <begin position="473"/>
        <end position="476"/>
    </location>
</feature>
<feature type="helix" evidence="17">
    <location>
        <begin position="478"/>
        <end position="481"/>
    </location>
</feature>
<dbReference type="EC" id="3.1.3.16" evidence="8 11"/>
<dbReference type="EMBL" id="D90035">
    <property type="protein sequence ID" value="BAA14083.1"/>
    <property type="molecule type" value="mRNA"/>
</dbReference>
<dbReference type="EMBL" id="M29275">
    <property type="protein sequence ID" value="AAA40940.1"/>
    <property type="molecule type" value="mRNA"/>
</dbReference>
<dbReference type="EMBL" id="X57115">
    <property type="protein sequence ID" value="CAA40398.2"/>
    <property type="molecule type" value="mRNA"/>
</dbReference>
<dbReference type="EMBL" id="D10480">
    <property type="protein sequence ID" value="BAA01283.1"/>
    <property type="molecule type" value="Genomic_DNA"/>
</dbReference>
<dbReference type="EMBL" id="M58440">
    <property type="protein sequence ID" value="AAA41914.1"/>
    <property type="molecule type" value="mRNA"/>
</dbReference>
<dbReference type="PIR" id="A33264">
    <property type="entry name" value="A33264"/>
</dbReference>
<dbReference type="RefSeq" id="NP_058737.1">
    <molecule id="P63329-1"/>
    <property type="nucleotide sequence ID" value="NM_017041.2"/>
</dbReference>
<dbReference type="RefSeq" id="XP_006233425.1">
    <molecule id="P63329-2"/>
    <property type="nucleotide sequence ID" value="XM_006233363.5"/>
</dbReference>
<dbReference type="PDB" id="4IL1">
    <property type="method" value="X-ray"/>
    <property type="resolution" value="3.00 A"/>
    <property type="chains" value="A/B/C/D=1-492"/>
</dbReference>
<dbReference type="PDBsum" id="4IL1"/>
<dbReference type="BMRB" id="P63329"/>
<dbReference type="SMR" id="P63329"/>
<dbReference type="BioGRID" id="246806">
    <property type="interactions" value="6"/>
</dbReference>
<dbReference type="CORUM" id="P63329"/>
<dbReference type="FunCoup" id="P63329">
    <property type="interactions" value="3361"/>
</dbReference>
<dbReference type="IntAct" id="P63329">
    <property type="interactions" value="6"/>
</dbReference>
<dbReference type="MINT" id="P63329"/>
<dbReference type="STRING" id="10116.ENSRNOP00000049674"/>
<dbReference type="GlyGen" id="P63329">
    <property type="glycosylation" value="1 site, 1 O-linked glycan (1 site)"/>
</dbReference>
<dbReference type="iPTMnet" id="P63329"/>
<dbReference type="PhosphoSitePlus" id="P63329"/>
<dbReference type="SwissPalm" id="P63329"/>
<dbReference type="jPOST" id="P63329"/>
<dbReference type="PaxDb" id="10116-ENSRNOP00000049674"/>
<dbReference type="Ensembl" id="ENSRNOT00000047975.6">
    <molecule id="P63329-2"/>
    <property type="protein sequence ID" value="ENSRNOP00000049674.6"/>
    <property type="gene ID" value="ENSRNOG00000009882.8"/>
</dbReference>
<dbReference type="Ensembl" id="ENSRNOT00000105262.1">
    <molecule id="P63329-1"/>
    <property type="protein sequence ID" value="ENSRNOP00000082751.1"/>
    <property type="gene ID" value="ENSRNOG00000009882.8"/>
</dbReference>
<dbReference type="GeneID" id="24674"/>
<dbReference type="KEGG" id="rno:24674"/>
<dbReference type="AGR" id="RGD:3382"/>
<dbReference type="CTD" id="5530"/>
<dbReference type="RGD" id="3382">
    <property type="gene designation" value="Ppp3ca"/>
</dbReference>
<dbReference type="eggNOG" id="KOG0375">
    <property type="taxonomic scope" value="Eukaryota"/>
</dbReference>
<dbReference type="GeneTree" id="ENSGT00940000156306"/>
<dbReference type="HOGENOM" id="CLU_004962_6_0_1"/>
<dbReference type="InParanoid" id="P63329"/>
<dbReference type="OrthoDB" id="256429at2759"/>
<dbReference type="PhylomeDB" id="P63329"/>
<dbReference type="BRENDA" id="3.1.3.16">
    <property type="organism ID" value="5301"/>
</dbReference>
<dbReference type="Reactome" id="R-RNO-2025928">
    <property type="pathway name" value="Calcineurin activates NFAT"/>
</dbReference>
<dbReference type="Reactome" id="R-RNO-2871809">
    <property type="pathway name" value="FCERI mediated Ca+2 mobilization"/>
</dbReference>
<dbReference type="Reactome" id="R-RNO-4086398">
    <property type="pathway name" value="Ca2+ pathway"/>
</dbReference>
<dbReference type="Reactome" id="R-RNO-5607763">
    <property type="pathway name" value="CLEC7A (Dectin-1) induces NFAT activation"/>
</dbReference>
<dbReference type="EvolutionaryTrace" id="P63329"/>
<dbReference type="PRO" id="PR:P63329"/>
<dbReference type="Proteomes" id="UP000002494">
    <property type="component" value="Chromosome 2"/>
</dbReference>
<dbReference type="Bgee" id="ENSRNOG00000009882">
    <property type="expression patterns" value="Expressed in Ammon's horn and 19 other cell types or tissues"/>
</dbReference>
<dbReference type="GO" id="GO:0005955">
    <property type="term" value="C:calcineurin complex"/>
    <property type="evidence" value="ECO:0000314"/>
    <property type="project" value="RGD"/>
</dbReference>
<dbReference type="GO" id="GO:0005737">
    <property type="term" value="C:cytoplasm"/>
    <property type="evidence" value="ECO:0000266"/>
    <property type="project" value="RGD"/>
</dbReference>
<dbReference type="GO" id="GO:0009898">
    <property type="term" value="C:cytoplasmic side of plasma membrane"/>
    <property type="evidence" value="ECO:0000266"/>
    <property type="project" value="RGD"/>
</dbReference>
<dbReference type="GO" id="GO:0005829">
    <property type="term" value="C:cytosol"/>
    <property type="evidence" value="ECO:0000266"/>
    <property type="project" value="RGD"/>
</dbReference>
<dbReference type="GO" id="GO:0043197">
    <property type="term" value="C:dendritic spine"/>
    <property type="evidence" value="ECO:0000266"/>
    <property type="project" value="RGD"/>
</dbReference>
<dbReference type="GO" id="GO:0098978">
    <property type="term" value="C:glutamatergic synapse"/>
    <property type="evidence" value="ECO:0000266"/>
    <property type="project" value="RGD"/>
</dbReference>
<dbReference type="GO" id="GO:0005739">
    <property type="term" value="C:mitochondrion"/>
    <property type="evidence" value="ECO:0000266"/>
    <property type="project" value="RGD"/>
</dbReference>
<dbReference type="GO" id="GO:0005634">
    <property type="term" value="C:nucleus"/>
    <property type="evidence" value="ECO:0000266"/>
    <property type="project" value="RGD"/>
</dbReference>
<dbReference type="GO" id="GO:0005886">
    <property type="term" value="C:plasma membrane"/>
    <property type="evidence" value="ECO:0000266"/>
    <property type="project" value="RGD"/>
</dbReference>
<dbReference type="GO" id="GO:0042383">
    <property type="term" value="C:sarcolemma"/>
    <property type="evidence" value="ECO:0007669"/>
    <property type="project" value="UniProtKB-SubCell"/>
</dbReference>
<dbReference type="GO" id="GO:0098685">
    <property type="term" value="C:Schaffer collateral - CA1 synapse"/>
    <property type="evidence" value="ECO:0000266"/>
    <property type="project" value="RGD"/>
</dbReference>
<dbReference type="GO" id="GO:0036057">
    <property type="term" value="C:slit diaphragm"/>
    <property type="evidence" value="ECO:0000314"/>
    <property type="project" value="RGD"/>
</dbReference>
<dbReference type="GO" id="GO:0045202">
    <property type="term" value="C:synapse"/>
    <property type="evidence" value="ECO:0000314"/>
    <property type="project" value="SynGO"/>
</dbReference>
<dbReference type="GO" id="GO:0030018">
    <property type="term" value="C:Z disc"/>
    <property type="evidence" value="ECO:0000266"/>
    <property type="project" value="RGD"/>
</dbReference>
<dbReference type="GO" id="GO:0051117">
    <property type="term" value="F:ATPase binding"/>
    <property type="evidence" value="ECO:0000266"/>
    <property type="project" value="RGD"/>
</dbReference>
<dbReference type="GO" id="GO:0004723">
    <property type="term" value="F:calcium-dependent protein serine/threonine phosphatase activity"/>
    <property type="evidence" value="ECO:0000314"/>
    <property type="project" value="RGD"/>
</dbReference>
<dbReference type="GO" id="GO:0005516">
    <property type="term" value="F:calmodulin binding"/>
    <property type="evidence" value="ECO:0000314"/>
    <property type="project" value="RGD"/>
</dbReference>
<dbReference type="GO" id="GO:0033192">
    <property type="term" value="F:calmodulin-dependent protein phosphatase activity"/>
    <property type="evidence" value="ECO:0000314"/>
    <property type="project" value="UniProtKB"/>
</dbReference>
<dbReference type="GO" id="GO:0019899">
    <property type="term" value="F:enzyme binding"/>
    <property type="evidence" value="ECO:0000266"/>
    <property type="project" value="RGD"/>
</dbReference>
<dbReference type="GO" id="GO:0046872">
    <property type="term" value="F:metal ion binding"/>
    <property type="evidence" value="ECO:0007669"/>
    <property type="project" value="UniProtKB-KW"/>
</dbReference>
<dbReference type="GO" id="GO:0004721">
    <property type="term" value="F:phosphoprotein phosphatase activity"/>
    <property type="evidence" value="ECO:0000314"/>
    <property type="project" value="RGD"/>
</dbReference>
<dbReference type="GO" id="GO:0046983">
    <property type="term" value="F:protein dimerization activity"/>
    <property type="evidence" value="ECO:0000266"/>
    <property type="project" value="RGD"/>
</dbReference>
<dbReference type="GO" id="GO:0004722">
    <property type="term" value="F:protein serine/threonine phosphatase activity"/>
    <property type="evidence" value="ECO:0000314"/>
    <property type="project" value="RGD"/>
</dbReference>
<dbReference type="GO" id="GO:0044877">
    <property type="term" value="F:protein-containing complex binding"/>
    <property type="evidence" value="ECO:0000314"/>
    <property type="project" value="RGD"/>
</dbReference>
<dbReference type="GO" id="GO:0097720">
    <property type="term" value="P:calcineurin-mediated signaling"/>
    <property type="evidence" value="ECO:0000266"/>
    <property type="project" value="RGD"/>
</dbReference>
<dbReference type="GO" id="GO:0033173">
    <property type="term" value="P:calcineurin-NFAT signaling cascade"/>
    <property type="evidence" value="ECO:0000266"/>
    <property type="project" value="RGD"/>
</dbReference>
<dbReference type="GO" id="GO:0006816">
    <property type="term" value="P:calcium ion transport"/>
    <property type="evidence" value="ECO:0000266"/>
    <property type="project" value="RGD"/>
</dbReference>
<dbReference type="GO" id="GO:0019722">
    <property type="term" value="P:calcium-mediated signaling"/>
    <property type="evidence" value="ECO:0000266"/>
    <property type="project" value="RGD"/>
</dbReference>
<dbReference type="GO" id="GO:0014898">
    <property type="term" value="P:cardiac muscle hypertrophy in response to stress"/>
    <property type="evidence" value="ECO:0000266"/>
    <property type="project" value="RGD"/>
</dbReference>
<dbReference type="GO" id="GO:0071333">
    <property type="term" value="P:cellular response to glucose stimulus"/>
    <property type="evidence" value="ECO:0000315"/>
    <property type="project" value="BHF-UCL"/>
</dbReference>
<dbReference type="GO" id="GO:0048813">
    <property type="term" value="P:dendrite morphogenesis"/>
    <property type="evidence" value="ECO:0000266"/>
    <property type="project" value="RGD"/>
</dbReference>
<dbReference type="GO" id="GO:0008544">
    <property type="term" value="P:epidermis development"/>
    <property type="evidence" value="ECO:0000250"/>
    <property type="project" value="UniProtKB"/>
</dbReference>
<dbReference type="GO" id="GO:0060079">
    <property type="term" value="P:excitatory postsynaptic potential"/>
    <property type="evidence" value="ECO:0000266"/>
    <property type="project" value="RGD"/>
</dbReference>
<dbReference type="GO" id="GO:0000082">
    <property type="term" value="P:G1/S transition of mitotic cell cycle"/>
    <property type="evidence" value="ECO:0000266"/>
    <property type="project" value="RGD"/>
</dbReference>
<dbReference type="GO" id="GO:0030216">
    <property type="term" value="P:keratinocyte differentiation"/>
    <property type="evidence" value="ECO:0000250"/>
    <property type="project" value="UniProtKB"/>
</dbReference>
<dbReference type="GO" id="GO:0050804">
    <property type="term" value="P:modulation of chemical synaptic transmission"/>
    <property type="evidence" value="ECO:0000250"/>
    <property type="project" value="UniProtKB"/>
</dbReference>
<dbReference type="GO" id="GO:0033555">
    <property type="term" value="P:multicellular organismal response to stress"/>
    <property type="evidence" value="ECO:0000266"/>
    <property type="project" value="RGD"/>
</dbReference>
<dbReference type="GO" id="GO:0110062">
    <property type="term" value="P:negative regulation of angiotensin-activated signaling pathway"/>
    <property type="evidence" value="ECO:0000266"/>
    <property type="project" value="RGD"/>
</dbReference>
<dbReference type="GO" id="GO:0045955">
    <property type="term" value="P:negative regulation of calcium ion-dependent exocytosis"/>
    <property type="evidence" value="ECO:0000305"/>
    <property type="project" value="BHF-UCL"/>
</dbReference>
<dbReference type="GO" id="GO:0050774">
    <property type="term" value="P:negative regulation of dendrite morphogenesis"/>
    <property type="evidence" value="ECO:0000266"/>
    <property type="project" value="RGD"/>
</dbReference>
<dbReference type="GO" id="GO:0010629">
    <property type="term" value="P:negative regulation of gene expression"/>
    <property type="evidence" value="ECO:0000266"/>
    <property type="project" value="RGD"/>
</dbReference>
<dbReference type="GO" id="GO:0046676">
    <property type="term" value="P:negative regulation of insulin secretion"/>
    <property type="evidence" value="ECO:0000315"/>
    <property type="project" value="BHF-UCL"/>
</dbReference>
<dbReference type="GO" id="GO:0023057">
    <property type="term" value="P:negative regulation of signaling"/>
    <property type="evidence" value="ECO:0000250"/>
    <property type="project" value="UniProtKB"/>
</dbReference>
<dbReference type="GO" id="GO:0042104">
    <property type="term" value="P:positive regulation of activated T cell proliferation"/>
    <property type="evidence" value="ECO:0000250"/>
    <property type="project" value="UniProtKB"/>
</dbReference>
<dbReference type="GO" id="GO:1903235">
    <property type="term" value="P:positive regulation of calcium ion-dependent exocytosis of neurotransmitter"/>
    <property type="evidence" value="ECO:0000315"/>
    <property type="project" value="ARUK-UCL"/>
</dbReference>
<dbReference type="GO" id="GO:0010613">
    <property type="term" value="P:positive regulation of cardiac muscle hypertrophy"/>
    <property type="evidence" value="ECO:0000266"/>
    <property type="project" value="RGD"/>
</dbReference>
<dbReference type="GO" id="GO:1903244">
    <property type="term" value="P:positive regulation of cardiac muscle hypertrophy in response to stress"/>
    <property type="evidence" value="ECO:0000266"/>
    <property type="project" value="RGD"/>
</dbReference>
<dbReference type="GO" id="GO:0045785">
    <property type="term" value="P:positive regulation of cell adhesion"/>
    <property type="evidence" value="ECO:0000266"/>
    <property type="project" value="RGD"/>
</dbReference>
<dbReference type="GO" id="GO:0030335">
    <property type="term" value="P:positive regulation of cell migration"/>
    <property type="evidence" value="ECO:0000266"/>
    <property type="project" value="RGD"/>
</dbReference>
<dbReference type="GO" id="GO:1905205">
    <property type="term" value="P:positive regulation of connective tissue replacement"/>
    <property type="evidence" value="ECO:0000266"/>
    <property type="project" value="RGD"/>
</dbReference>
<dbReference type="GO" id="GO:0045807">
    <property type="term" value="P:positive regulation of endocytosis"/>
    <property type="evidence" value="ECO:0000266"/>
    <property type="project" value="RGD"/>
</dbReference>
<dbReference type="GO" id="GO:0010628">
    <property type="term" value="P:positive regulation of gene expression"/>
    <property type="evidence" value="ECO:0000266"/>
    <property type="project" value="RGD"/>
</dbReference>
<dbReference type="GO" id="GO:0090193">
    <property type="term" value="P:positive regulation of glomerulus development"/>
    <property type="evidence" value="ECO:0000250"/>
    <property type="project" value="UniProtKB"/>
</dbReference>
<dbReference type="GO" id="GO:0045669">
    <property type="term" value="P:positive regulation of osteoblast differentiation"/>
    <property type="evidence" value="ECO:0000250"/>
    <property type="project" value="UniProtKB"/>
</dbReference>
<dbReference type="GO" id="GO:0045672">
    <property type="term" value="P:positive regulation of osteoclast differentiation"/>
    <property type="evidence" value="ECO:0000250"/>
    <property type="project" value="UniProtKB"/>
</dbReference>
<dbReference type="GO" id="GO:0046878">
    <property type="term" value="P:positive regulation of saliva secretion"/>
    <property type="evidence" value="ECO:0000250"/>
    <property type="project" value="UniProtKB"/>
</dbReference>
<dbReference type="GO" id="GO:0045944">
    <property type="term" value="P:positive regulation of transcription by RNA polymerase II"/>
    <property type="evidence" value="ECO:0000266"/>
    <property type="project" value="RGD"/>
</dbReference>
<dbReference type="GO" id="GO:0099170">
    <property type="term" value="P:postsynaptic modulation of chemical synaptic transmission"/>
    <property type="evidence" value="ECO:0000266"/>
    <property type="project" value="RGD"/>
</dbReference>
<dbReference type="GO" id="GO:0006470">
    <property type="term" value="P:protein dephosphorylation"/>
    <property type="evidence" value="ECO:0000314"/>
    <property type="project" value="UniProtKB"/>
</dbReference>
<dbReference type="GO" id="GO:0006606">
    <property type="term" value="P:protein import into nucleus"/>
    <property type="evidence" value="ECO:0000314"/>
    <property type="project" value="RGD"/>
</dbReference>
<dbReference type="GO" id="GO:0061006">
    <property type="term" value="P:regulation of cell proliferation involved in kidney morphogenesis"/>
    <property type="evidence" value="ECO:0000250"/>
    <property type="project" value="UniProtKB"/>
</dbReference>
<dbReference type="GO" id="GO:0097205">
    <property type="term" value="P:renal filtration"/>
    <property type="evidence" value="ECO:0000250"/>
    <property type="project" value="UniProtKB"/>
</dbReference>
<dbReference type="GO" id="GO:0001975">
    <property type="term" value="P:response to amphetamine"/>
    <property type="evidence" value="ECO:0000270"/>
    <property type="project" value="RGD"/>
</dbReference>
<dbReference type="GO" id="GO:0051592">
    <property type="term" value="P:response to calcium ion"/>
    <property type="evidence" value="ECO:0000250"/>
    <property type="project" value="UniProtKB"/>
</dbReference>
<dbReference type="GO" id="GO:0048741">
    <property type="term" value="P:skeletal muscle fiber development"/>
    <property type="evidence" value="ECO:0000250"/>
    <property type="project" value="UniProtKB"/>
</dbReference>
<dbReference type="GO" id="GO:0014883">
    <property type="term" value="P:transition between fast and slow fiber"/>
    <property type="evidence" value="ECO:0000266"/>
    <property type="project" value="RGD"/>
</dbReference>
<dbReference type="CDD" id="cd07416">
    <property type="entry name" value="MPP_PP2B"/>
    <property type="match status" value="1"/>
</dbReference>
<dbReference type="FunFam" id="3.60.21.10:FF:000002">
    <property type="entry name" value="Serine/threonine-protein phosphatase"/>
    <property type="match status" value="1"/>
</dbReference>
<dbReference type="Gene3D" id="3.60.21.10">
    <property type="match status" value="1"/>
</dbReference>
<dbReference type="InterPro" id="IPR004843">
    <property type="entry name" value="Calcineurin-like_PHP_ApaH"/>
</dbReference>
<dbReference type="InterPro" id="IPR029052">
    <property type="entry name" value="Metallo-depent_PP-like"/>
</dbReference>
<dbReference type="InterPro" id="IPR041751">
    <property type="entry name" value="MPP_PP2B"/>
</dbReference>
<dbReference type="InterPro" id="IPR043360">
    <property type="entry name" value="PP2B"/>
</dbReference>
<dbReference type="InterPro" id="IPR006186">
    <property type="entry name" value="Ser/Thr-sp_prot-phosphatase"/>
</dbReference>
<dbReference type="PANTHER" id="PTHR45673">
    <property type="entry name" value="SERINE/THREONINE-PROTEIN PHOSPHATASE 2B CATALYTIC SUBUNIT 1-RELATED"/>
    <property type="match status" value="1"/>
</dbReference>
<dbReference type="Pfam" id="PF00149">
    <property type="entry name" value="Metallophos"/>
    <property type="match status" value="1"/>
</dbReference>
<dbReference type="PRINTS" id="PR00114">
    <property type="entry name" value="STPHPHTASE"/>
</dbReference>
<dbReference type="SMART" id="SM00156">
    <property type="entry name" value="PP2Ac"/>
    <property type="match status" value="1"/>
</dbReference>
<dbReference type="SUPFAM" id="SSF56300">
    <property type="entry name" value="Metallo-dependent phosphatases"/>
    <property type="match status" value="1"/>
</dbReference>
<dbReference type="PROSITE" id="PS00125">
    <property type="entry name" value="SER_THR_PHOSPHATASE"/>
    <property type="match status" value="1"/>
</dbReference>
<protein>
    <recommendedName>
        <fullName evidence="15">Protein phosphatase 3 catalytic subunit alpha</fullName>
        <ecNumber evidence="8 11">3.1.3.16</ecNumber>
    </recommendedName>
    <alternativeName>
        <fullName>CAM-PRP catalytic subunit</fullName>
    </alternativeName>
    <alternativeName>
        <fullName evidence="13">Calcineurin A alpha</fullName>
    </alternativeName>
    <alternativeName>
        <fullName evidence="3">Calmodulin-dependent calcineurin A subunit alpha isoform</fullName>
        <shortName evidence="3">CNA alpha</shortName>
    </alternativeName>
    <alternativeName>
        <fullName evidence="4">Serine/threonine-protein phosphatase 2B catalytic subunit alpha isoform</fullName>
    </alternativeName>
</protein>
<proteinExistence type="evidence at protein level"/>